<name>EIF3D_ARATH</name>
<protein>
    <recommendedName>
        <fullName evidence="2">Eukaryotic translation initiation factor 3 subunit D</fullName>
        <shortName evidence="2">eIF3d</shortName>
    </recommendedName>
    <alternativeName>
        <fullName evidence="2">Eukaryotic translation initiation factor 3 subunit 7</fullName>
    </alternativeName>
    <alternativeName>
        <fullName evidence="2">eIF-3-zeta</fullName>
    </alternativeName>
    <alternativeName>
        <fullName>p66</fullName>
    </alternativeName>
</protein>
<evidence type="ECO:0000250" key="1">
    <source>
        <dbReference type="UniProtKB" id="K7IM66"/>
    </source>
</evidence>
<evidence type="ECO:0000255" key="2">
    <source>
        <dbReference type="HAMAP-Rule" id="MF_03003"/>
    </source>
</evidence>
<evidence type="ECO:0000256" key="3">
    <source>
        <dbReference type="SAM" id="MobiDB-lite"/>
    </source>
</evidence>
<evidence type="ECO:0000269" key="4">
    <source>
    </source>
</evidence>
<comment type="function">
    <text evidence="2">mRNA cap-binding component of the eukaryotic translation initiation factor 3 (eIF-3) complex, which is involved in protein synthesis of a specialized repertoire of mRNAs and, together with other initiation factors, stimulates binding of mRNA and methionyl-tRNAi to the 40S ribosome. The eIF-3 complex specifically targets and initiates translation of a subset of mRNAs involved in cell proliferation. In the eIF-3 complex, eif3d specifically recognizes and binds the 7-methylguanosine cap of a subset of mRNAs.</text>
</comment>
<comment type="subunit">
    <text evidence="2 4">Component of the eukaryotic translation initiation factor 3 (eIF-3) complex, which is composed of at least 13 different subunits.</text>
</comment>
<comment type="subcellular location">
    <subcellularLocation>
        <location evidence="2">Cytoplasm</location>
    </subcellularLocation>
</comment>
<comment type="domain">
    <text evidence="2">The RNA gate region regulates mRNA cap recognition to prevent promiscuous mRNA-binding before assembly of eif3d into the full eukaryotic translation initiation factor 3 (eIF-3) complex.</text>
</comment>
<comment type="similarity">
    <text evidence="2">Belongs to the eIF-3 subunit D family.</text>
</comment>
<sequence length="591" mass="66725">MVTEAFEFVAVPFNSDGWGPPDASDVSSSASPTSVAAANLLPNVPFASFSRSDKLGRVADWTRNLSNPSARPNTGSKSDPSAVFDFSAFAIDEGFGLASSGGNPDEDAAFRLVDGKPPPRPKFGPKWRFNPHHNRNQLPQRRDEEVEAKKRDAEKERARRDRLYNNNRNNIHHQRREAAAFKSSVDIQPEWNMLEQIPFSTFSKLSYTVQEPEDLLLCGGLEYYNRLFDRITPKNERRLERFKNRNFFKVTTSDDPVIRRLAKEDKATVFATDAILAALMCAPRSVYSWDIVIQRVGNKLFFDKRDGSQLDLLSVHETSQEPLPESKDDINSAHSLGVEAAYINQNFSQQVLVRDGKKETFDEANPFANEGEEIASVAYRYRRWKLDDNMHLVARCELQSVADLNNQRSFLTLNALNEFDPKYSGVDWRQKLETQRGAVLATELKNNGNKLAKWTAQALLANADMMKIGFVSRVHPRDHFNHVILSVLGYKPKDFAGQINLNTSNMWGIVKSIVDLCMKLSEGKYVLVKDPSKPQVRIYEVPPDAFENDYVEEPLPEDEQVQPTEENTEGAEASVAATKETEEKKADDAQA</sequence>
<dbReference type="EMBL" id="AL080282">
    <property type="protein sequence ID" value="CAB45893.1"/>
    <property type="molecule type" value="Genomic_DNA"/>
</dbReference>
<dbReference type="EMBL" id="AL161554">
    <property type="protein sequence ID" value="CAB79098.1"/>
    <property type="molecule type" value="Genomic_DNA"/>
</dbReference>
<dbReference type="EMBL" id="CP002687">
    <property type="protein sequence ID" value="AEE84381.1"/>
    <property type="molecule type" value="Genomic_DNA"/>
</dbReference>
<dbReference type="EMBL" id="CP002687">
    <property type="protein sequence ID" value="AEE84382.1"/>
    <property type="molecule type" value="Genomic_DNA"/>
</dbReference>
<dbReference type="EMBL" id="CP002687">
    <property type="protein sequence ID" value="AEE84383.1"/>
    <property type="molecule type" value="Genomic_DNA"/>
</dbReference>
<dbReference type="EMBL" id="CP002687">
    <property type="protein sequence ID" value="AEE84384.1"/>
    <property type="molecule type" value="Genomic_DNA"/>
</dbReference>
<dbReference type="EMBL" id="AK317111">
    <property type="protein sequence ID" value="BAH19799.1"/>
    <property type="molecule type" value="mRNA"/>
</dbReference>
<dbReference type="EMBL" id="BT044604">
    <property type="protein sequence ID" value="ACI31304.1"/>
    <property type="molecule type" value="mRNA"/>
</dbReference>
<dbReference type="EMBL" id="AF291714">
    <property type="protein sequence ID" value="AAG53638.1"/>
    <property type="molecule type" value="mRNA"/>
</dbReference>
<dbReference type="PIR" id="T10640">
    <property type="entry name" value="T10640"/>
</dbReference>
<dbReference type="RefSeq" id="NP_001031683.1">
    <property type="nucleotide sequence ID" value="NM_001036606.1"/>
</dbReference>
<dbReference type="RefSeq" id="NP_001031684.1">
    <property type="nucleotide sequence ID" value="NM_001036607.1"/>
</dbReference>
<dbReference type="RefSeq" id="NP_001190783.1">
    <property type="nucleotide sequence ID" value="NM_001203854.1"/>
</dbReference>
<dbReference type="RefSeq" id="NP_193830.1">
    <property type="nucleotide sequence ID" value="NM_118216.4"/>
</dbReference>
<dbReference type="SMR" id="P56820"/>
<dbReference type="BioGRID" id="13136">
    <property type="interactions" value="21"/>
</dbReference>
<dbReference type="FunCoup" id="P56820">
    <property type="interactions" value="5152"/>
</dbReference>
<dbReference type="STRING" id="3702.P56820"/>
<dbReference type="iPTMnet" id="P56820"/>
<dbReference type="PaxDb" id="3702-AT4G20980.2"/>
<dbReference type="ProteomicsDB" id="222230"/>
<dbReference type="EnsemblPlants" id="AT4G20980.1">
    <property type="protein sequence ID" value="AT4G20980.1"/>
    <property type="gene ID" value="AT4G20980"/>
</dbReference>
<dbReference type="EnsemblPlants" id="AT4G20980.2">
    <property type="protein sequence ID" value="AT4G20980.2"/>
    <property type="gene ID" value="AT4G20980"/>
</dbReference>
<dbReference type="EnsemblPlants" id="AT4G20980.3">
    <property type="protein sequence ID" value="AT4G20980.3"/>
    <property type="gene ID" value="AT4G20980"/>
</dbReference>
<dbReference type="EnsemblPlants" id="AT4G20980.4">
    <property type="protein sequence ID" value="AT4G20980.4"/>
    <property type="gene ID" value="AT4G20980"/>
</dbReference>
<dbReference type="GeneID" id="827845"/>
<dbReference type="Gramene" id="AT4G20980.1">
    <property type="protein sequence ID" value="AT4G20980.1"/>
    <property type="gene ID" value="AT4G20980"/>
</dbReference>
<dbReference type="Gramene" id="AT4G20980.2">
    <property type="protein sequence ID" value="AT4G20980.2"/>
    <property type="gene ID" value="AT4G20980"/>
</dbReference>
<dbReference type="Gramene" id="AT4G20980.3">
    <property type="protein sequence ID" value="AT4G20980.3"/>
    <property type="gene ID" value="AT4G20980"/>
</dbReference>
<dbReference type="Gramene" id="AT4G20980.4">
    <property type="protein sequence ID" value="AT4G20980.4"/>
    <property type="gene ID" value="AT4G20980"/>
</dbReference>
<dbReference type="KEGG" id="ath:AT4G20980"/>
<dbReference type="Araport" id="AT4G20980"/>
<dbReference type="TAIR" id="AT4G20980"/>
<dbReference type="eggNOG" id="KOG2479">
    <property type="taxonomic scope" value="Eukaryota"/>
</dbReference>
<dbReference type="HOGENOM" id="CLU_024521_2_0_1"/>
<dbReference type="InParanoid" id="P56820"/>
<dbReference type="OMA" id="CKHNGVI"/>
<dbReference type="PhylomeDB" id="P56820"/>
<dbReference type="PRO" id="PR:P56820"/>
<dbReference type="Proteomes" id="UP000006548">
    <property type="component" value="Chromosome 4"/>
</dbReference>
<dbReference type="ExpressionAtlas" id="P56820">
    <property type="expression patterns" value="baseline and differential"/>
</dbReference>
<dbReference type="GO" id="GO:0005829">
    <property type="term" value="C:cytosol"/>
    <property type="evidence" value="ECO:0007005"/>
    <property type="project" value="TAIR"/>
</dbReference>
<dbReference type="GO" id="GO:0016282">
    <property type="term" value="C:eukaryotic 43S preinitiation complex"/>
    <property type="evidence" value="ECO:0007669"/>
    <property type="project" value="UniProtKB-UniRule"/>
</dbReference>
<dbReference type="GO" id="GO:0033290">
    <property type="term" value="C:eukaryotic 48S preinitiation complex"/>
    <property type="evidence" value="ECO:0007669"/>
    <property type="project" value="UniProtKB-UniRule"/>
</dbReference>
<dbReference type="GO" id="GO:0005852">
    <property type="term" value="C:eukaryotic translation initiation factor 3 complex"/>
    <property type="evidence" value="ECO:0007669"/>
    <property type="project" value="UniProtKB-UniRule"/>
</dbReference>
<dbReference type="GO" id="GO:0003729">
    <property type="term" value="F:mRNA binding"/>
    <property type="evidence" value="ECO:0000314"/>
    <property type="project" value="TAIR"/>
</dbReference>
<dbReference type="GO" id="GO:0098808">
    <property type="term" value="F:mRNA cap binding"/>
    <property type="evidence" value="ECO:0007669"/>
    <property type="project" value="UniProtKB-UniRule"/>
</dbReference>
<dbReference type="GO" id="GO:0003743">
    <property type="term" value="F:translation initiation factor activity"/>
    <property type="evidence" value="ECO:0007669"/>
    <property type="project" value="UniProtKB-UniRule"/>
</dbReference>
<dbReference type="GO" id="GO:0002191">
    <property type="term" value="P:cap-dependent translational initiation"/>
    <property type="evidence" value="ECO:0007669"/>
    <property type="project" value="UniProtKB-UniRule"/>
</dbReference>
<dbReference type="GO" id="GO:0001732">
    <property type="term" value="P:formation of cytoplasmic translation initiation complex"/>
    <property type="evidence" value="ECO:0007669"/>
    <property type="project" value="UniProtKB-UniRule"/>
</dbReference>
<dbReference type="HAMAP" id="MF_03003">
    <property type="entry name" value="eIF3d"/>
    <property type="match status" value="1"/>
</dbReference>
<dbReference type="InterPro" id="IPR007783">
    <property type="entry name" value="eIF3d"/>
</dbReference>
<dbReference type="PANTHER" id="PTHR12399">
    <property type="entry name" value="EUKARYOTIC TRANSLATION INITIATION FACTOR 3 SUBUNIT 7"/>
    <property type="match status" value="1"/>
</dbReference>
<dbReference type="PANTHER" id="PTHR12399:SF3">
    <property type="entry name" value="EUKARYOTIC TRANSLATION INITIATION FACTOR 3 SUBUNIT D"/>
    <property type="match status" value="1"/>
</dbReference>
<dbReference type="Pfam" id="PF05091">
    <property type="entry name" value="eIF-3_zeta"/>
    <property type="match status" value="1"/>
</dbReference>
<dbReference type="PIRSF" id="PIRSF016281">
    <property type="entry name" value="EIF-3_zeta"/>
    <property type="match status" value="1"/>
</dbReference>
<proteinExistence type="evidence at protein level"/>
<organism>
    <name type="scientific">Arabidopsis thaliana</name>
    <name type="common">Mouse-ear cress</name>
    <dbReference type="NCBI Taxonomy" id="3702"/>
    <lineage>
        <taxon>Eukaryota</taxon>
        <taxon>Viridiplantae</taxon>
        <taxon>Streptophyta</taxon>
        <taxon>Embryophyta</taxon>
        <taxon>Tracheophyta</taxon>
        <taxon>Spermatophyta</taxon>
        <taxon>Magnoliopsida</taxon>
        <taxon>eudicotyledons</taxon>
        <taxon>Gunneridae</taxon>
        <taxon>Pentapetalae</taxon>
        <taxon>rosids</taxon>
        <taxon>malvids</taxon>
        <taxon>Brassicales</taxon>
        <taxon>Brassicaceae</taxon>
        <taxon>Camelineae</taxon>
        <taxon>Arabidopsis</taxon>
    </lineage>
</organism>
<reference key="1">
    <citation type="journal article" date="1999" name="Nature">
        <title>Sequence and analysis of chromosome 4 of the plant Arabidopsis thaliana.</title>
        <authorList>
            <person name="Mayer K.F.X."/>
            <person name="Schueller C."/>
            <person name="Wambutt R."/>
            <person name="Murphy G."/>
            <person name="Volckaert G."/>
            <person name="Pohl T."/>
            <person name="Duesterhoeft A."/>
            <person name="Stiekema W."/>
            <person name="Entian K.-D."/>
            <person name="Terryn N."/>
            <person name="Harris B."/>
            <person name="Ansorge W."/>
            <person name="Brandt P."/>
            <person name="Grivell L.A."/>
            <person name="Rieger M."/>
            <person name="Weichselgartner M."/>
            <person name="de Simone V."/>
            <person name="Obermaier B."/>
            <person name="Mache R."/>
            <person name="Mueller M."/>
            <person name="Kreis M."/>
            <person name="Delseny M."/>
            <person name="Puigdomenech P."/>
            <person name="Watson M."/>
            <person name="Schmidtheini T."/>
            <person name="Reichert B."/>
            <person name="Portetelle D."/>
            <person name="Perez-Alonso M."/>
            <person name="Boutry M."/>
            <person name="Bancroft I."/>
            <person name="Vos P."/>
            <person name="Hoheisel J."/>
            <person name="Zimmermann W."/>
            <person name="Wedler H."/>
            <person name="Ridley P."/>
            <person name="Langham S.-A."/>
            <person name="McCullagh B."/>
            <person name="Bilham L."/>
            <person name="Robben J."/>
            <person name="van der Schueren J."/>
            <person name="Grymonprez B."/>
            <person name="Chuang Y.-J."/>
            <person name="Vandenbussche F."/>
            <person name="Braeken M."/>
            <person name="Weltjens I."/>
            <person name="Voet M."/>
            <person name="Bastiaens I."/>
            <person name="Aert R."/>
            <person name="Defoor E."/>
            <person name="Weitzenegger T."/>
            <person name="Bothe G."/>
            <person name="Ramsperger U."/>
            <person name="Hilbert H."/>
            <person name="Braun M."/>
            <person name="Holzer E."/>
            <person name="Brandt A."/>
            <person name="Peters S."/>
            <person name="van Staveren M."/>
            <person name="Dirkse W."/>
            <person name="Mooijman P."/>
            <person name="Klein Lankhorst R."/>
            <person name="Rose M."/>
            <person name="Hauf J."/>
            <person name="Koetter P."/>
            <person name="Berneiser S."/>
            <person name="Hempel S."/>
            <person name="Feldpausch M."/>
            <person name="Lamberth S."/>
            <person name="Van den Daele H."/>
            <person name="De Keyser A."/>
            <person name="Buysshaert C."/>
            <person name="Gielen J."/>
            <person name="Villarroel R."/>
            <person name="De Clercq R."/>
            <person name="van Montagu M."/>
            <person name="Rogers J."/>
            <person name="Cronin A."/>
            <person name="Quail M.A."/>
            <person name="Bray-Allen S."/>
            <person name="Clark L."/>
            <person name="Doggett J."/>
            <person name="Hall S."/>
            <person name="Kay M."/>
            <person name="Lennard N."/>
            <person name="McLay K."/>
            <person name="Mayes R."/>
            <person name="Pettett A."/>
            <person name="Rajandream M.A."/>
            <person name="Lyne M."/>
            <person name="Benes V."/>
            <person name="Rechmann S."/>
            <person name="Borkova D."/>
            <person name="Bloecker H."/>
            <person name="Scharfe M."/>
            <person name="Grimm M."/>
            <person name="Loehnert T.-H."/>
            <person name="Dose S."/>
            <person name="de Haan M."/>
            <person name="Maarse A.C."/>
            <person name="Schaefer M."/>
            <person name="Mueller-Auer S."/>
            <person name="Gabel C."/>
            <person name="Fuchs M."/>
            <person name="Fartmann B."/>
            <person name="Granderath K."/>
            <person name="Dauner D."/>
            <person name="Herzl A."/>
            <person name="Neumann S."/>
            <person name="Argiriou A."/>
            <person name="Vitale D."/>
            <person name="Liguori R."/>
            <person name="Piravandi E."/>
            <person name="Massenet O."/>
            <person name="Quigley F."/>
            <person name="Clabauld G."/>
            <person name="Muendlein A."/>
            <person name="Felber R."/>
            <person name="Schnabl S."/>
            <person name="Hiller R."/>
            <person name="Schmidt W."/>
            <person name="Lecharny A."/>
            <person name="Aubourg S."/>
            <person name="Chefdor F."/>
            <person name="Cooke R."/>
            <person name="Berger C."/>
            <person name="Monfort A."/>
            <person name="Casacuberta E."/>
            <person name="Gibbons T."/>
            <person name="Weber N."/>
            <person name="Vandenbol M."/>
            <person name="Bargues M."/>
            <person name="Terol J."/>
            <person name="Torres A."/>
            <person name="Perez-Perez A."/>
            <person name="Purnelle B."/>
            <person name="Bent E."/>
            <person name="Johnson S."/>
            <person name="Tacon D."/>
            <person name="Jesse T."/>
            <person name="Heijnen L."/>
            <person name="Schwarz S."/>
            <person name="Scholler P."/>
            <person name="Heber S."/>
            <person name="Francs P."/>
            <person name="Bielke C."/>
            <person name="Frishman D."/>
            <person name="Haase D."/>
            <person name="Lemcke K."/>
            <person name="Mewes H.-W."/>
            <person name="Stocker S."/>
            <person name="Zaccaria P."/>
            <person name="Bevan M."/>
            <person name="Wilson R.K."/>
            <person name="de la Bastide M."/>
            <person name="Habermann K."/>
            <person name="Parnell L."/>
            <person name="Dedhia N."/>
            <person name="Gnoj L."/>
            <person name="Schutz K."/>
            <person name="Huang E."/>
            <person name="Spiegel L."/>
            <person name="Sekhon M."/>
            <person name="Murray J."/>
            <person name="Sheet P."/>
            <person name="Cordes M."/>
            <person name="Abu-Threideh J."/>
            <person name="Stoneking T."/>
            <person name="Kalicki J."/>
            <person name="Graves T."/>
            <person name="Harmon G."/>
            <person name="Edwards J."/>
            <person name="Latreille P."/>
            <person name="Courtney L."/>
            <person name="Cloud J."/>
            <person name="Abbott A."/>
            <person name="Scott K."/>
            <person name="Johnson D."/>
            <person name="Minx P."/>
            <person name="Bentley D."/>
            <person name="Fulton B."/>
            <person name="Miller N."/>
            <person name="Greco T."/>
            <person name="Kemp K."/>
            <person name="Kramer J."/>
            <person name="Fulton L."/>
            <person name="Mardis E."/>
            <person name="Dante M."/>
            <person name="Pepin K."/>
            <person name="Hillier L.W."/>
            <person name="Nelson J."/>
            <person name="Spieth J."/>
            <person name="Ryan E."/>
            <person name="Andrews S."/>
            <person name="Geisel C."/>
            <person name="Layman D."/>
            <person name="Du H."/>
            <person name="Ali J."/>
            <person name="Berghoff A."/>
            <person name="Jones K."/>
            <person name="Drone K."/>
            <person name="Cotton M."/>
            <person name="Joshu C."/>
            <person name="Antonoiu B."/>
            <person name="Zidanic M."/>
            <person name="Strong C."/>
            <person name="Sun H."/>
            <person name="Lamar B."/>
            <person name="Yordan C."/>
            <person name="Ma P."/>
            <person name="Zhong J."/>
            <person name="Preston R."/>
            <person name="Vil D."/>
            <person name="Shekher M."/>
            <person name="Matero A."/>
            <person name="Shah R."/>
            <person name="Swaby I.K."/>
            <person name="O'Shaughnessy A."/>
            <person name="Rodriguez M."/>
            <person name="Hoffman J."/>
            <person name="Till S."/>
            <person name="Granat S."/>
            <person name="Shohdy N."/>
            <person name="Hasegawa A."/>
            <person name="Hameed A."/>
            <person name="Lodhi M."/>
            <person name="Johnson A."/>
            <person name="Chen E."/>
            <person name="Marra M.A."/>
            <person name="Martienssen R."/>
            <person name="McCombie W.R."/>
        </authorList>
    </citation>
    <scope>NUCLEOTIDE SEQUENCE [LARGE SCALE GENOMIC DNA]</scope>
    <source>
        <strain>cv. Columbia</strain>
    </source>
</reference>
<reference key="2">
    <citation type="journal article" date="2017" name="Plant J.">
        <title>Araport11: a complete reannotation of the Arabidopsis thaliana reference genome.</title>
        <authorList>
            <person name="Cheng C.Y."/>
            <person name="Krishnakumar V."/>
            <person name="Chan A.P."/>
            <person name="Thibaud-Nissen F."/>
            <person name="Schobel S."/>
            <person name="Town C.D."/>
        </authorList>
    </citation>
    <scope>GENOME REANNOTATION</scope>
    <source>
        <strain>cv. Columbia</strain>
    </source>
</reference>
<reference key="3">
    <citation type="journal article" date="2009" name="DNA Res.">
        <title>Analysis of multiple occurrences of alternative splicing events in Arabidopsis thaliana using novel sequenced full-length cDNAs.</title>
        <authorList>
            <person name="Iida K."/>
            <person name="Fukami-Kobayashi K."/>
            <person name="Toyoda A."/>
            <person name="Sakaki Y."/>
            <person name="Kobayashi M."/>
            <person name="Seki M."/>
            <person name="Shinozaki K."/>
        </authorList>
    </citation>
    <scope>NUCLEOTIDE SEQUENCE [LARGE SCALE MRNA]</scope>
    <source>
        <strain>cv. Columbia</strain>
    </source>
</reference>
<reference key="4">
    <citation type="submission" date="2008-10" db="EMBL/GenBank/DDBJ databases">
        <title>Arabidopsis ORF clones.</title>
        <authorList>
            <person name="De Los Reyes C."/>
            <person name="Quan R."/>
            <person name="Chen H."/>
            <person name="Bautista V.R."/>
            <person name="Kim C.J."/>
            <person name="Ecker J.R."/>
        </authorList>
    </citation>
    <scope>NUCLEOTIDE SEQUENCE [LARGE SCALE MRNA]</scope>
    <source>
        <strain>cv. Columbia</strain>
    </source>
</reference>
<reference key="5">
    <citation type="journal article" date="2001" name="J. Biol. Chem.">
        <title>Plant initiation factor 3 subunit composition resembles mammalian initiation factor 3 and has a novel subunit.</title>
        <authorList>
            <person name="Burks E.A."/>
            <person name="Bezerra P.P."/>
            <person name="Le H."/>
            <person name="Gallie D.R."/>
            <person name="Browning K.S."/>
        </authorList>
    </citation>
    <scope>NUCLEOTIDE SEQUENCE [MRNA] OF 174-591</scope>
    <scope>SUBUNIT</scope>
    <source>
        <strain>cv. Columbia</strain>
    </source>
</reference>
<reference key="6">
    <citation type="journal article" date="2009" name="Plant Physiol.">
        <title>Large-scale Arabidopsis phosphoproteome profiling reveals novel chloroplast kinase substrates and phosphorylation networks.</title>
        <authorList>
            <person name="Reiland S."/>
            <person name="Messerli G."/>
            <person name="Baerenfaller K."/>
            <person name="Gerrits B."/>
            <person name="Endler A."/>
            <person name="Grossmann J."/>
            <person name="Gruissem W."/>
            <person name="Baginsky S."/>
        </authorList>
    </citation>
    <scope>IDENTIFICATION BY MASS SPECTROMETRY [LARGE SCALE ANALYSIS]</scope>
</reference>
<accession>P56820</accession>
<accession>B5X0N5</accession>
<accession>Q9C5Y8</accession>
<feature type="chain" id="PRO_0000123522" description="Eukaryotic translation initiation factor 3 subunit D">
    <location>
        <begin position="1"/>
        <end position="591"/>
    </location>
</feature>
<feature type="region of interest" description="Disordered" evidence="3">
    <location>
        <begin position="100"/>
        <end position="159"/>
    </location>
</feature>
<feature type="region of interest" description="RNA gate" evidence="1">
    <location>
        <begin position="309"/>
        <end position="323"/>
    </location>
</feature>
<feature type="region of interest" description="Disordered" evidence="3">
    <location>
        <begin position="549"/>
        <end position="591"/>
    </location>
</feature>
<feature type="compositionally biased region" description="Basic residues" evidence="3">
    <location>
        <begin position="123"/>
        <end position="135"/>
    </location>
</feature>
<feature type="compositionally biased region" description="Basic and acidic residues" evidence="3">
    <location>
        <begin position="140"/>
        <end position="159"/>
    </location>
</feature>
<feature type="compositionally biased region" description="Acidic residues" evidence="3">
    <location>
        <begin position="549"/>
        <end position="560"/>
    </location>
</feature>
<feature type="compositionally biased region" description="Basic and acidic residues" evidence="3">
    <location>
        <begin position="579"/>
        <end position="591"/>
    </location>
</feature>
<keyword id="KW-0963">Cytoplasm</keyword>
<keyword id="KW-0396">Initiation factor</keyword>
<keyword id="KW-0648">Protein biosynthesis</keyword>
<keyword id="KW-1185">Reference proteome</keyword>
<keyword id="KW-0694">RNA-binding</keyword>
<gene>
    <name type="primary">TIF3D1</name>
    <name type="ordered locus">At4g20980</name>
    <name type="ORF">T13K14.140</name>
</gene>